<gene>
    <name type="ordered locus">At2g39540</name>
    <name type="ORF">F12L6.20</name>
</gene>
<comment type="function">
    <text evidence="1">Gibberellin-regulated protein that may function in hormonal controlled steps of development such as seed germination, flowering and seed maturation.</text>
</comment>
<comment type="subcellular location">
    <subcellularLocation>
        <location evidence="1">Secreted</location>
    </subcellularLocation>
</comment>
<comment type="tissue specificity">
    <text evidence="3">Expressed in roots and developing seeds.</text>
</comment>
<comment type="PTM">
    <text evidence="1">Six disulfide bonds may be present.</text>
</comment>
<comment type="similarity">
    <text evidence="4">Belongs to the GASA family.</text>
</comment>
<reference key="1">
    <citation type="journal article" date="1999" name="Nature">
        <title>Sequence and analysis of chromosome 2 of the plant Arabidopsis thaliana.</title>
        <authorList>
            <person name="Lin X."/>
            <person name="Kaul S."/>
            <person name="Rounsley S.D."/>
            <person name="Shea T.P."/>
            <person name="Benito M.-I."/>
            <person name="Town C.D."/>
            <person name="Fujii C.Y."/>
            <person name="Mason T.M."/>
            <person name="Bowman C.L."/>
            <person name="Barnstead M.E."/>
            <person name="Feldblyum T.V."/>
            <person name="Buell C.R."/>
            <person name="Ketchum K.A."/>
            <person name="Lee J.J."/>
            <person name="Ronning C.M."/>
            <person name="Koo H.L."/>
            <person name="Moffat K.S."/>
            <person name="Cronin L.A."/>
            <person name="Shen M."/>
            <person name="Pai G."/>
            <person name="Van Aken S."/>
            <person name="Umayam L."/>
            <person name="Tallon L.J."/>
            <person name="Gill J.E."/>
            <person name="Adams M.D."/>
            <person name="Carrera A.J."/>
            <person name="Creasy T.H."/>
            <person name="Goodman H.M."/>
            <person name="Somerville C.R."/>
            <person name="Copenhaver G.P."/>
            <person name="Preuss D."/>
            <person name="Nierman W.C."/>
            <person name="White O."/>
            <person name="Eisen J.A."/>
            <person name="Salzberg S.L."/>
            <person name="Fraser C.M."/>
            <person name="Venter J.C."/>
        </authorList>
    </citation>
    <scope>NUCLEOTIDE SEQUENCE [LARGE SCALE GENOMIC DNA]</scope>
    <source>
        <strain>cv. Columbia</strain>
    </source>
</reference>
<reference key="2">
    <citation type="journal article" date="2017" name="Plant J.">
        <title>Araport11: a complete reannotation of the Arabidopsis thaliana reference genome.</title>
        <authorList>
            <person name="Cheng C.Y."/>
            <person name="Krishnakumar V."/>
            <person name="Chan A.P."/>
            <person name="Thibaud-Nissen F."/>
            <person name="Schobel S."/>
            <person name="Town C.D."/>
        </authorList>
    </citation>
    <scope>GENOME REANNOTATION</scope>
    <source>
        <strain>cv. Columbia</strain>
    </source>
</reference>
<reference key="3">
    <citation type="journal article" date="2007" name="Plant Cell Physiol.">
        <title>GASA4, one of the 14-member Arabidopsis GASA family of small polypeptides, regulates flowering and seed development.</title>
        <authorList>
            <person name="Roxrud I."/>
            <person name="Lid S.E."/>
            <person name="Fletcher J.C."/>
            <person name="Schmidt E.D."/>
            <person name="Opsahl-Sorteberg H.G."/>
        </authorList>
    </citation>
    <scope>TISSUE SPECIFICITY</scope>
</reference>
<proteinExistence type="evidence at transcript level"/>
<evidence type="ECO:0000250" key="1"/>
<evidence type="ECO:0000255" key="2"/>
<evidence type="ECO:0000269" key="3">
    <source>
    </source>
</evidence>
<evidence type="ECO:0000305" key="4"/>
<dbReference type="EMBL" id="AC004218">
    <property type="protein sequence ID" value="AAC27845.1"/>
    <property type="molecule type" value="Genomic_DNA"/>
</dbReference>
<dbReference type="EMBL" id="CP002685">
    <property type="protein sequence ID" value="AEC09692.1"/>
    <property type="molecule type" value="Genomic_DNA"/>
</dbReference>
<dbReference type="PIR" id="T00564">
    <property type="entry name" value="T00564"/>
</dbReference>
<dbReference type="RefSeq" id="NP_181486.1">
    <property type="nucleotide sequence ID" value="NM_129512.2"/>
</dbReference>
<dbReference type="SMR" id="O80641"/>
<dbReference type="STRING" id="3702.O80641"/>
<dbReference type="PaxDb" id="3702-AT2G39540.1"/>
<dbReference type="ProteomicsDB" id="230010"/>
<dbReference type="EnsemblPlants" id="AT2G39540.1">
    <property type="protein sequence ID" value="AT2G39540.1"/>
    <property type="gene ID" value="AT2G39540"/>
</dbReference>
<dbReference type="GeneID" id="818539"/>
<dbReference type="Gramene" id="AT2G39540.1">
    <property type="protein sequence ID" value="AT2G39540.1"/>
    <property type="gene ID" value="AT2G39540"/>
</dbReference>
<dbReference type="KEGG" id="ath:AT2G39540"/>
<dbReference type="Araport" id="AT2G39540"/>
<dbReference type="TAIR" id="AT2G39540"/>
<dbReference type="eggNOG" id="ENOG502S46W">
    <property type="taxonomic scope" value="Eukaryota"/>
</dbReference>
<dbReference type="HOGENOM" id="CLU_142643_5_0_1"/>
<dbReference type="InParanoid" id="O80641"/>
<dbReference type="OMA" id="CCGKCNG"/>
<dbReference type="OrthoDB" id="847210at2759"/>
<dbReference type="PhylomeDB" id="O80641"/>
<dbReference type="PRO" id="PR:O80641"/>
<dbReference type="Proteomes" id="UP000006548">
    <property type="component" value="Chromosome 2"/>
</dbReference>
<dbReference type="ExpressionAtlas" id="O80641">
    <property type="expression patterns" value="differential"/>
</dbReference>
<dbReference type="GO" id="GO:0005576">
    <property type="term" value="C:extracellular region"/>
    <property type="evidence" value="ECO:0007669"/>
    <property type="project" value="UniProtKB-SubCell"/>
</dbReference>
<dbReference type="GO" id="GO:0009740">
    <property type="term" value="P:gibberellic acid mediated signaling pathway"/>
    <property type="evidence" value="ECO:0007669"/>
    <property type="project" value="UniProtKB-KW"/>
</dbReference>
<dbReference type="InterPro" id="IPR003854">
    <property type="entry name" value="GASA"/>
</dbReference>
<dbReference type="PANTHER" id="PTHR23201">
    <property type="entry name" value="EXTENSIN, PROLINE-RICH PROTEIN"/>
    <property type="match status" value="1"/>
</dbReference>
<dbReference type="PANTHER" id="PTHR23201:SF56">
    <property type="entry name" value="GIBBERELLIN-REGULATED FAMILY PROTEIN-RELATED"/>
    <property type="match status" value="1"/>
</dbReference>
<dbReference type="Pfam" id="PF02704">
    <property type="entry name" value="GASA"/>
    <property type="match status" value="1"/>
</dbReference>
<keyword id="KW-1015">Disulfide bond</keyword>
<keyword id="KW-0939">Gibberellin signaling pathway</keyword>
<keyword id="KW-1185">Reference proteome</keyword>
<keyword id="KW-0964">Secreted</keyword>
<keyword id="KW-0732">Signal</keyword>
<sequence length="87" mass="9440">MKLVVVQFFIISLLLTSSFSVLSSADSSCGGKCNVRCSKAGQHEECLKYCNICCQKCNCVPSGTFGHKDECPCYRDMKNSKGGSKCP</sequence>
<protein>
    <recommendedName>
        <fullName>Gibberellin-regulated protein 8</fullName>
    </recommendedName>
    <alternativeName>
        <fullName>GAST1 protein homolog 8</fullName>
    </alternativeName>
</protein>
<name>GASA8_ARATH</name>
<organism>
    <name type="scientific">Arabidopsis thaliana</name>
    <name type="common">Mouse-ear cress</name>
    <dbReference type="NCBI Taxonomy" id="3702"/>
    <lineage>
        <taxon>Eukaryota</taxon>
        <taxon>Viridiplantae</taxon>
        <taxon>Streptophyta</taxon>
        <taxon>Embryophyta</taxon>
        <taxon>Tracheophyta</taxon>
        <taxon>Spermatophyta</taxon>
        <taxon>Magnoliopsida</taxon>
        <taxon>eudicotyledons</taxon>
        <taxon>Gunneridae</taxon>
        <taxon>Pentapetalae</taxon>
        <taxon>rosids</taxon>
        <taxon>malvids</taxon>
        <taxon>Brassicales</taxon>
        <taxon>Brassicaceae</taxon>
        <taxon>Camelineae</taxon>
        <taxon>Arabidopsis</taxon>
    </lineage>
</organism>
<feature type="signal peptide" evidence="2">
    <location>
        <begin position="1"/>
        <end position="25"/>
    </location>
</feature>
<feature type="chain" id="PRO_0000413706" description="Gibberellin-regulated protein 8">
    <location>
        <begin position="26"/>
        <end position="87"/>
    </location>
</feature>
<accession>O80641</accession>